<accession>Q7A135</accession>
<feature type="chain" id="PRO_0000232486" description="Uncharacterized N-acetyltransferase MW1059">
    <location>
        <begin position="1"/>
        <end position="146"/>
    </location>
</feature>
<feature type="domain" description="N-acetyltransferase">
    <location>
        <begin position="7"/>
        <end position="146"/>
    </location>
</feature>
<protein>
    <recommendedName>
        <fullName>Uncharacterized N-acetyltransferase MW1059</fullName>
        <ecNumber>2.3.1.-</ecNumber>
    </recommendedName>
</protein>
<name>Y1059_STAAW</name>
<reference key="1">
    <citation type="journal article" date="2002" name="Lancet">
        <title>Genome and virulence determinants of high virulence community-acquired MRSA.</title>
        <authorList>
            <person name="Baba T."/>
            <person name="Takeuchi F."/>
            <person name="Kuroda M."/>
            <person name="Yuzawa H."/>
            <person name="Aoki K."/>
            <person name="Oguchi A."/>
            <person name="Nagai Y."/>
            <person name="Iwama N."/>
            <person name="Asano K."/>
            <person name="Naimi T."/>
            <person name="Kuroda H."/>
            <person name="Cui L."/>
            <person name="Yamamoto K."/>
            <person name="Hiramatsu K."/>
        </authorList>
    </citation>
    <scope>NUCLEOTIDE SEQUENCE [LARGE SCALE GENOMIC DNA]</scope>
    <source>
        <strain>MW2</strain>
    </source>
</reference>
<keyword id="KW-0012">Acyltransferase</keyword>
<keyword id="KW-0808">Transferase</keyword>
<proteinExistence type="inferred from homology"/>
<dbReference type="EC" id="2.3.1.-"/>
<dbReference type="EMBL" id="BA000033">
    <property type="protein sequence ID" value="BAB94924.1"/>
    <property type="molecule type" value="Genomic_DNA"/>
</dbReference>
<dbReference type="RefSeq" id="WP_001289711.1">
    <property type="nucleotide sequence ID" value="NC_003923.1"/>
</dbReference>
<dbReference type="SMR" id="Q7A135"/>
<dbReference type="KEGG" id="sam:MW1059"/>
<dbReference type="HOGENOM" id="CLU_136634_0_0_9"/>
<dbReference type="GO" id="GO:0016747">
    <property type="term" value="F:acyltransferase activity, transferring groups other than amino-acyl groups"/>
    <property type="evidence" value="ECO:0007669"/>
    <property type="project" value="UniProtKB-UniRule"/>
</dbReference>
<dbReference type="CDD" id="cd04301">
    <property type="entry name" value="NAT_SF"/>
    <property type="match status" value="1"/>
</dbReference>
<dbReference type="Gene3D" id="3.40.630.30">
    <property type="match status" value="1"/>
</dbReference>
<dbReference type="HAMAP" id="MF_00824">
    <property type="entry name" value="Acetyltransf_YlbP"/>
    <property type="match status" value="1"/>
</dbReference>
<dbReference type="InterPro" id="IPR016181">
    <property type="entry name" value="Acyl_CoA_acyltransferase"/>
</dbReference>
<dbReference type="InterPro" id="IPR000182">
    <property type="entry name" value="GNAT_dom"/>
</dbReference>
<dbReference type="InterPro" id="IPR017274">
    <property type="entry name" value="YlbP"/>
</dbReference>
<dbReference type="NCBIfam" id="NF010241">
    <property type="entry name" value="PRK13688.1"/>
    <property type="match status" value="1"/>
</dbReference>
<dbReference type="PIRSF" id="PIRSF037732">
    <property type="entry name" value="YlbP_prd"/>
    <property type="match status" value="1"/>
</dbReference>
<dbReference type="SUPFAM" id="SSF55729">
    <property type="entry name" value="Acyl-CoA N-acyltransferases (Nat)"/>
    <property type="match status" value="1"/>
</dbReference>
<dbReference type="PROSITE" id="PS51186">
    <property type="entry name" value="GNAT"/>
    <property type="match status" value="1"/>
</dbReference>
<organism>
    <name type="scientific">Staphylococcus aureus (strain MW2)</name>
    <dbReference type="NCBI Taxonomy" id="196620"/>
    <lineage>
        <taxon>Bacteria</taxon>
        <taxon>Bacillati</taxon>
        <taxon>Bacillota</taxon>
        <taxon>Bacilli</taxon>
        <taxon>Bacillales</taxon>
        <taxon>Staphylococcaceae</taxon>
        <taxon>Staphylococcus</taxon>
    </lineage>
</organism>
<gene>
    <name type="ordered locus">MW1059</name>
</gene>
<sequence>MSEIKRLEINYKTDELFENFRAFGNKDLYMVNELNGQMIDASSDSPFYGIFVGDQLGARMALLKKGDVEEIYFPDFEDYILLWKLEVLPKYQNRGYASELIDFAKSFNMPIKAIGRNDSKDFFLHHGFTDVEAKNIEGHDVLLWKP</sequence>